<gene>
    <name evidence="1" type="primary">sucC</name>
    <name type="ordered locus">MJ0210</name>
</gene>
<accession>Q57663</accession>
<organism>
    <name type="scientific">Methanocaldococcus jannaschii (strain ATCC 43067 / DSM 2661 / JAL-1 / JCM 10045 / NBRC 100440)</name>
    <name type="common">Methanococcus jannaschii</name>
    <dbReference type="NCBI Taxonomy" id="243232"/>
    <lineage>
        <taxon>Archaea</taxon>
        <taxon>Methanobacteriati</taxon>
        <taxon>Methanobacteriota</taxon>
        <taxon>Methanomada group</taxon>
        <taxon>Methanococci</taxon>
        <taxon>Methanococcales</taxon>
        <taxon>Methanocaldococcaceae</taxon>
        <taxon>Methanocaldococcus</taxon>
    </lineage>
</organism>
<proteinExistence type="inferred from homology"/>
<comment type="function">
    <text evidence="1">Succinyl-CoA synthetase functions in the citric acid cycle (TCA), coupling the hydrolysis of succinyl-CoA to the synthesis of either ATP or GTP and thus represents the only step of substrate-level phosphorylation in the TCA. The beta subunit provides nucleotide specificity of the enzyme and binds the substrate succinate, while the binding sites for coenzyme A and phosphate are found in the alpha subunit.</text>
</comment>
<comment type="catalytic activity">
    <reaction evidence="1">
        <text>succinate + ATP + CoA = succinyl-CoA + ADP + phosphate</text>
        <dbReference type="Rhea" id="RHEA:17661"/>
        <dbReference type="ChEBI" id="CHEBI:30031"/>
        <dbReference type="ChEBI" id="CHEBI:30616"/>
        <dbReference type="ChEBI" id="CHEBI:43474"/>
        <dbReference type="ChEBI" id="CHEBI:57287"/>
        <dbReference type="ChEBI" id="CHEBI:57292"/>
        <dbReference type="ChEBI" id="CHEBI:456216"/>
        <dbReference type="EC" id="6.2.1.5"/>
    </reaction>
    <physiologicalReaction direction="right-to-left" evidence="1">
        <dbReference type="Rhea" id="RHEA:17663"/>
    </physiologicalReaction>
</comment>
<comment type="catalytic activity">
    <reaction evidence="1">
        <text>GTP + succinate + CoA = succinyl-CoA + GDP + phosphate</text>
        <dbReference type="Rhea" id="RHEA:22120"/>
        <dbReference type="ChEBI" id="CHEBI:30031"/>
        <dbReference type="ChEBI" id="CHEBI:37565"/>
        <dbReference type="ChEBI" id="CHEBI:43474"/>
        <dbReference type="ChEBI" id="CHEBI:57287"/>
        <dbReference type="ChEBI" id="CHEBI:57292"/>
        <dbReference type="ChEBI" id="CHEBI:58189"/>
    </reaction>
    <physiologicalReaction direction="right-to-left" evidence="1">
        <dbReference type="Rhea" id="RHEA:22122"/>
    </physiologicalReaction>
</comment>
<comment type="cofactor">
    <cofactor evidence="1">
        <name>Mg(2+)</name>
        <dbReference type="ChEBI" id="CHEBI:18420"/>
    </cofactor>
    <text evidence="1">Binds 1 Mg(2+) ion per subunit.</text>
</comment>
<comment type="pathway">
    <text evidence="1">Carbohydrate metabolism; tricarboxylic acid cycle; succinate from succinyl-CoA (ligase route): step 1/1.</text>
</comment>
<comment type="subunit">
    <text evidence="1">Heterotetramer of two alpha and two beta subunits.</text>
</comment>
<comment type="similarity">
    <text evidence="1">Belongs to the succinate/malate CoA ligase beta subunit family.</text>
</comment>
<protein>
    <recommendedName>
        <fullName evidence="1">Succinate--CoA ligase [ADP-forming] subunit beta</fullName>
        <ecNumber evidence="1">6.2.1.5</ecNumber>
    </recommendedName>
    <alternativeName>
        <fullName evidence="1">Succinyl-CoA synthetase subunit beta</fullName>
        <shortName evidence="1">SCS-beta</shortName>
    </alternativeName>
</protein>
<evidence type="ECO:0000255" key="1">
    <source>
        <dbReference type="HAMAP-Rule" id="MF_00558"/>
    </source>
</evidence>
<dbReference type="EC" id="6.2.1.5" evidence="1"/>
<dbReference type="EMBL" id="L77117">
    <property type="protein sequence ID" value="AAB98195.1"/>
    <property type="molecule type" value="Genomic_DNA"/>
</dbReference>
<dbReference type="PIR" id="C64326">
    <property type="entry name" value="C64326"/>
</dbReference>
<dbReference type="RefSeq" id="WP_010869705.1">
    <property type="nucleotide sequence ID" value="NC_000909.1"/>
</dbReference>
<dbReference type="SMR" id="Q57663"/>
<dbReference type="FunCoup" id="Q57663">
    <property type="interactions" value="231"/>
</dbReference>
<dbReference type="STRING" id="243232.MJ_0210"/>
<dbReference type="PaxDb" id="243232-MJ_0210"/>
<dbReference type="EnsemblBacteria" id="AAB98195">
    <property type="protein sequence ID" value="AAB98195"/>
    <property type="gene ID" value="MJ_0210"/>
</dbReference>
<dbReference type="GeneID" id="1451059"/>
<dbReference type="KEGG" id="mja:MJ_0210"/>
<dbReference type="eggNOG" id="arCOG01337">
    <property type="taxonomic scope" value="Archaea"/>
</dbReference>
<dbReference type="HOGENOM" id="CLU_037430_0_2_2"/>
<dbReference type="InParanoid" id="Q57663"/>
<dbReference type="OrthoDB" id="146449at2157"/>
<dbReference type="PhylomeDB" id="Q57663"/>
<dbReference type="UniPathway" id="UPA00223">
    <property type="reaction ID" value="UER00999"/>
</dbReference>
<dbReference type="Proteomes" id="UP000000805">
    <property type="component" value="Chromosome"/>
</dbReference>
<dbReference type="GO" id="GO:0042709">
    <property type="term" value="C:succinate-CoA ligase complex"/>
    <property type="evidence" value="ECO:0000318"/>
    <property type="project" value="GO_Central"/>
</dbReference>
<dbReference type="GO" id="GO:0005524">
    <property type="term" value="F:ATP binding"/>
    <property type="evidence" value="ECO:0007669"/>
    <property type="project" value="UniProtKB-UniRule"/>
</dbReference>
<dbReference type="GO" id="GO:0000287">
    <property type="term" value="F:magnesium ion binding"/>
    <property type="evidence" value="ECO:0007669"/>
    <property type="project" value="UniProtKB-UniRule"/>
</dbReference>
<dbReference type="GO" id="GO:0004775">
    <property type="term" value="F:succinate-CoA ligase (ADP-forming) activity"/>
    <property type="evidence" value="ECO:0000318"/>
    <property type="project" value="GO_Central"/>
</dbReference>
<dbReference type="GO" id="GO:0004776">
    <property type="term" value="F:succinate-CoA ligase (GDP-forming) activity"/>
    <property type="evidence" value="ECO:0007669"/>
    <property type="project" value="RHEA"/>
</dbReference>
<dbReference type="GO" id="GO:0006104">
    <property type="term" value="P:succinyl-CoA metabolic process"/>
    <property type="evidence" value="ECO:0000318"/>
    <property type="project" value="GO_Central"/>
</dbReference>
<dbReference type="GO" id="GO:0006099">
    <property type="term" value="P:tricarboxylic acid cycle"/>
    <property type="evidence" value="ECO:0000318"/>
    <property type="project" value="GO_Central"/>
</dbReference>
<dbReference type="FunFam" id="3.30.470.20:FF:000002">
    <property type="entry name" value="Succinate--CoA ligase [ADP-forming] subunit beta"/>
    <property type="match status" value="1"/>
</dbReference>
<dbReference type="Gene3D" id="3.30.1490.20">
    <property type="entry name" value="ATP-grasp fold, A domain"/>
    <property type="match status" value="1"/>
</dbReference>
<dbReference type="Gene3D" id="3.30.470.20">
    <property type="entry name" value="ATP-grasp fold, B domain"/>
    <property type="match status" value="1"/>
</dbReference>
<dbReference type="Gene3D" id="3.40.50.261">
    <property type="entry name" value="Succinyl-CoA synthetase domains"/>
    <property type="match status" value="1"/>
</dbReference>
<dbReference type="HAMAP" id="MF_00558">
    <property type="entry name" value="Succ_CoA_beta"/>
    <property type="match status" value="1"/>
</dbReference>
<dbReference type="InterPro" id="IPR011761">
    <property type="entry name" value="ATP-grasp"/>
</dbReference>
<dbReference type="InterPro" id="IPR013650">
    <property type="entry name" value="ATP-grasp_succ-CoA_synth-type"/>
</dbReference>
<dbReference type="InterPro" id="IPR013815">
    <property type="entry name" value="ATP_grasp_subdomain_1"/>
</dbReference>
<dbReference type="InterPro" id="IPR017866">
    <property type="entry name" value="Succ-CoA_synthase_bsu_CS"/>
</dbReference>
<dbReference type="InterPro" id="IPR005811">
    <property type="entry name" value="SUCC_ACL_C"/>
</dbReference>
<dbReference type="InterPro" id="IPR005809">
    <property type="entry name" value="Succ_CoA_ligase-like_bsu"/>
</dbReference>
<dbReference type="InterPro" id="IPR016102">
    <property type="entry name" value="Succinyl-CoA_synth-like"/>
</dbReference>
<dbReference type="NCBIfam" id="NF001913">
    <property type="entry name" value="PRK00696.1"/>
    <property type="match status" value="1"/>
</dbReference>
<dbReference type="NCBIfam" id="TIGR01016">
    <property type="entry name" value="sucCoAbeta"/>
    <property type="match status" value="1"/>
</dbReference>
<dbReference type="PANTHER" id="PTHR11815:SF10">
    <property type="entry name" value="SUCCINATE--COA LIGASE [GDP-FORMING] SUBUNIT BETA, MITOCHONDRIAL"/>
    <property type="match status" value="1"/>
</dbReference>
<dbReference type="PANTHER" id="PTHR11815">
    <property type="entry name" value="SUCCINYL-COA SYNTHETASE BETA CHAIN"/>
    <property type="match status" value="1"/>
</dbReference>
<dbReference type="Pfam" id="PF08442">
    <property type="entry name" value="ATP-grasp_2"/>
    <property type="match status" value="1"/>
</dbReference>
<dbReference type="Pfam" id="PF00549">
    <property type="entry name" value="Ligase_CoA"/>
    <property type="match status" value="1"/>
</dbReference>
<dbReference type="PIRSF" id="PIRSF001554">
    <property type="entry name" value="SucCS_beta"/>
    <property type="match status" value="1"/>
</dbReference>
<dbReference type="SUPFAM" id="SSF56059">
    <property type="entry name" value="Glutathione synthetase ATP-binding domain-like"/>
    <property type="match status" value="1"/>
</dbReference>
<dbReference type="SUPFAM" id="SSF52210">
    <property type="entry name" value="Succinyl-CoA synthetase domains"/>
    <property type="match status" value="1"/>
</dbReference>
<dbReference type="PROSITE" id="PS50975">
    <property type="entry name" value="ATP_GRASP"/>
    <property type="match status" value="1"/>
</dbReference>
<dbReference type="PROSITE" id="PS01217">
    <property type="entry name" value="SUCCINYL_COA_LIG_3"/>
    <property type="match status" value="1"/>
</dbReference>
<sequence>MKLHEYEAKNIFKKYGIPVPESFLVSKEDDLNSINVDKEVVLKAQVLVGGRGKAGGILFASNKEEFIKKAEELFNKEVKGEKVEKILVEEKLPIEKEYYVSIIIDRDAKKPLIIFSTEGGVDIEEVAEKNPEKIIKYHIDVRKPFLPYIARWIVKEAKLPSNEIGKVADVIYKLYKIFKELDATMVEINPLVITKDGNVYAADAVLHLDDDAAFRHNYEEFEEYKNKEKLPFAYVELDGDVAVIGNGAGLTLASMDIINNLGRKPACFLDIGGGADAETVKLALRKVLENKNVKGIFINILGGITRCDEVAKGIVEVLKEHPNVKFAVRMMGTNEEIGRKILEEHGIPYETSMEEAGRKLIEQL</sequence>
<name>SUCC_METJA</name>
<feature type="chain" id="PRO_0000102885" description="Succinate--CoA ligase [ADP-forming] subunit beta">
    <location>
        <begin position="1"/>
        <end position="364"/>
    </location>
</feature>
<feature type="domain" description="ATP-grasp" evidence="1">
    <location>
        <begin position="9"/>
        <end position="229"/>
    </location>
</feature>
<feature type="binding site" evidence="1">
    <location>
        <position position="43"/>
    </location>
    <ligand>
        <name>ATP</name>
        <dbReference type="ChEBI" id="CHEBI:30616"/>
    </ligand>
</feature>
<feature type="binding site" evidence="1">
    <location>
        <begin position="50"/>
        <end position="52"/>
    </location>
    <ligand>
        <name>ATP</name>
        <dbReference type="ChEBI" id="CHEBI:30616"/>
    </ligand>
</feature>
<feature type="binding site" evidence="1">
    <location>
        <position position="89"/>
    </location>
    <ligand>
        <name>ATP</name>
        <dbReference type="ChEBI" id="CHEBI:30616"/>
    </ligand>
</feature>
<feature type="binding site" evidence="1">
    <location>
        <position position="92"/>
    </location>
    <ligand>
        <name>ATP</name>
        <dbReference type="ChEBI" id="CHEBI:30616"/>
    </ligand>
</feature>
<feature type="binding site" evidence="1">
    <location>
        <position position="97"/>
    </location>
    <ligand>
        <name>ATP</name>
        <dbReference type="ChEBI" id="CHEBI:30616"/>
    </ligand>
</feature>
<feature type="binding site" evidence="1">
    <location>
        <position position="189"/>
    </location>
    <ligand>
        <name>Mg(2+)</name>
        <dbReference type="ChEBI" id="CHEBI:18420"/>
    </ligand>
</feature>
<feature type="binding site" evidence="1">
    <location>
        <position position="203"/>
    </location>
    <ligand>
        <name>Mg(2+)</name>
        <dbReference type="ChEBI" id="CHEBI:18420"/>
    </ligand>
</feature>
<feature type="binding site" evidence="1">
    <location>
        <position position="246"/>
    </location>
    <ligand>
        <name>substrate</name>
        <note>ligand shared with subunit alpha</note>
    </ligand>
</feature>
<feature type="binding site" evidence="1">
    <location>
        <begin position="303"/>
        <end position="305"/>
    </location>
    <ligand>
        <name>substrate</name>
        <note>ligand shared with subunit alpha</note>
    </ligand>
</feature>
<reference key="1">
    <citation type="journal article" date="1996" name="Science">
        <title>Complete genome sequence of the methanogenic archaeon, Methanococcus jannaschii.</title>
        <authorList>
            <person name="Bult C.J."/>
            <person name="White O."/>
            <person name="Olsen G.J."/>
            <person name="Zhou L."/>
            <person name="Fleischmann R.D."/>
            <person name="Sutton G.G."/>
            <person name="Blake J.A."/>
            <person name="FitzGerald L.M."/>
            <person name="Clayton R.A."/>
            <person name="Gocayne J.D."/>
            <person name="Kerlavage A.R."/>
            <person name="Dougherty B.A."/>
            <person name="Tomb J.-F."/>
            <person name="Adams M.D."/>
            <person name="Reich C.I."/>
            <person name="Overbeek R."/>
            <person name="Kirkness E.F."/>
            <person name="Weinstock K.G."/>
            <person name="Merrick J.M."/>
            <person name="Glodek A."/>
            <person name="Scott J.L."/>
            <person name="Geoghagen N.S.M."/>
            <person name="Weidman J.F."/>
            <person name="Fuhrmann J.L."/>
            <person name="Nguyen D."/>
            <person name="Utterback T.R."/>
            <person name="Kelley J.M."/>
            <person name="Peterson J.D."/>
            <person name="Sadow P.W."/>
            <person name="Hanna M.C."/>
            <person name="Cotton M.D."/>
            <person name="Roberts K.M."/>
            <person name="Hurst M.A."/>
            <person name="Kaine B.P."/>
            <person name="Borodovsky M."/>
            <person name="Klenk H.-P."/>
            <person name="Fraser C.M."/>
            <person name="Smith H.O."/>
            <person name="Woese C.R."/>
            <person name="Venter J.C."/>
        </authorList>
    </citation>
    <scope>NUCLEOTIDE SEQUENCE [LARGE SCALE GENOMIC DNA]</scope>
    <source>
        <strain>ATCC 43067 / DSM 2661 / JAL-1 / JCM 10045 / NBRC 100440</strain>
    </source>
</reference>
<keyword id="KW-0067">ATP-binding</keyword>
<keyword id="KW-0436">Ligase</keyword>
<keyword id="KW-0460">Magnesium</keyword>
<keyword id="KW-0479">Metal-binding</keyword>
<keyword id="KW-0547">Nucleotide-binding</keyword>
<keyword id="KW-1185">Reference proteome</keyword>
<keyword id="KW-0816">Tricarboxylic acid cycle</keyword>